<reference key="1">
    <citation type="journal article" date="1992" name="Gene">
        <title>Structural and functional analysis of the amdR regulatory gene of Aspergillus oryzae.</title>
        <authorList>
            <person name="Wang X.W."/>
            <person name="Hynes M.J."/>
            <person name="Davis M.A."/>
        </authorList>
    </citation>
    <scope>NUCLEOTIDE SEQUENCE [GENOMIC DNA]</scope>
    <source>
        <strain>A1560 / IFO 4177</strain>
    </source>
</reference>
<reference key="2">
    <citation type="journal article" date="2005" name="Nature">
        <title>Genome sequencing and analysis of Aspergillus oryzae.</title>
        <authorList>
            <person name="Machida M."/>
            <person name="Asai K."/>
            <person name="Sano M."/>
            <person name="Tanaka T."/>
            <person name="Kumagai T."/>
            <person name="Terai G."/>
            <person name="Kusumoto K."/>
            <person name="Arima T."/>
            <person name="Akita O."/>
            <person name="Kashiwagi Y."/>
            <person name="Abe K."/>
            <person name="Gomi K."/>
            <person name="Horiuchi H."/>
            <person name="Kitamoto K."/>
            <person name="Kobayashi T."/>
            <person name="Takeuchi M."/>
            <person name="Denning D.W."/>
            <person name="Galagan J.E."/>
            <person name="Nierman W.C."/>
            <person name="Yu J."/>
            <person name="Archer D.B."/>
            <person name="Bennett J.W."/>
            <person name="Bhatnagar D."/>
            <person name="Cleveland T.E."/>
            <person name="Fedorova N.D."/>
            <person name="Gotoh O."/>
            <person name="Horikawa H."/>
            <person name="Hosoyama A."/>
            <person name="Ichinomiya M."/>
            <person name="Igarashi R."/>
            <person name="Iwashita K."/>
            <person name="Juvvadi P.R."/>
            <person name="Kato M."/>
            <person name="Kato Y."/>
            <person name="Kin T."/>
            <person name="Kokubun A."/>
            <person name="Maeda H."/>
            <person name="Maeyama N."/>
            <person name="Maruyama J."/>
            <person name="Nagasaki H."/>
            <person name="Nakajima T."/>
            <person name="Oda K."/>
            <person name="Okada K."/>
            <person name="Paulsen I."/>
            <person name="Sakamoto K."/>
            <person name="Sawano T."/>
            <person name="Takahashi M."/>
            <person name="Takase K."/>
            <person name="Terabayashi Y."/>
            <person name="Wortman J.R."/>
            <person name="Yamada O."/>
            <person name="Yamagata Y."/>
            <person name="Anazawa H."/>
            <person name="Hata Y."/>
            <person name="Koide Y."/>
            <person name="Komori T."/>
            <person name="Koyama Y."/>
            <person name="Minetoki T."/>
            <person name="Suharnan S."/>
            <person name="Tanaka A."/>
            <person name="Isono K."/>
            <person name="Kuhara S."/>
            <person name="Ogasawara N."/>
            <person name="Kikuchi H."/>
        </authorList>
    </citation>
    <scope>NUCLEOTIDE SEQUENCE [LARGE SCALE GENOMIC DNA]</scope>
    <source>
        <strain>ATCC 42149 / RIB 40</strain>
    </source>
</reference>
<keyword id="KW-0010">Activator</keyword>
<keyword id="KW-0238">DNA-binding</keyword>
<keyword id="KW-0479">Metal-binding</keyword>
<keyword id="KW-0539">Nucleus</keyword>
<keyword id="KW-1185">Reference proteome</keyword>
<keyword id="KW-0804">Transcription</keyword>
<keyword id="KW-0805">Transcription regulation</keyword>
<keyword id="KW-0862">Zinc</keyword>
<name>AMDR_ASPOR</name>
<comment type="function">
    <text>Positively regulates the expression of genes involved in the catabolism of certain amides, omega amino acids, and lactams.</text>
</comment>
<comment type="subcellular location">
    <subcellularLocation>
        <location>Nucleus</location>
    </subcellularLocation>
</comment>
<comment type="induction">
    <text>By omega amino acids.</text>
</comment>
<comment type="sequence caution" evidence="3">
    <conflict type="erroneous gene model prediction">
        <sequence resource="EMBL-CDS" id="AAA32686"/>
    </conflict>
</comment>
<feature type="chain" id="PRO_0000114935" description="Acetamidase regulatory protein">
    <location>
        <begin position="1"/>
        <end position="775"/>
    </location>
</feature>
<feature type="DNA-binding region" description="Zn(2)-C6 fungal-type" evidence="1">
    <location>
        <begin position="26"/>
        <end position="59"/>
    </location>
</feature>
<feature type="region of interest" description="Disordered" evidence="2">
    <location>
        <begin position="1"/>
        <end position="20"/>
    </location>
</feature>
<feature type="region of interest" description="Disordered" evidence="2">
    <location>
        <begin position="126"/>
        <end position="159"/>
    </location>
</feature>
<feature type="region of interest" description="Disordered" evidence="2">
    <location>
        <begin position="630"/>
        <end position="699"/>
    </location>
</feature>
<feature type="compositionally biased region" description="Polar residues" evidence="2">
    <location>
        <begin position="1"/>
        <end position="15"/>
    </location>
</feature>
<feature type="compositionally biased region" description="Polar residues" evidence="2">
    <location>
        <begin position="126"/>
        <end position="153"/>
    </location>
</feature>
<feature type="compositionally biased region" description="Basic and acidic residues" evidence="2">
    <location>
        <begin position="630"/>
        <end position="644"/>
    </location>
</feature>
<feature type="compositionally biased region" description="Pro residues" evidence="2">
    <location>
        <begin position="674"/>
        <end position="689"/>
    </location>
</feature>
<feature type="sequence conflict" description="In Ref. 1; AAA32686." evidence="3" ref="1">
    <original>QL</original>
    <variation>PV</variation>
    <location>
        <begin position="727"/>
        <end position="728"/>
    </location>
</feature>
<protein>
    <recommendedName>
        <fullName>Acetamidase regulatory protein</fullName>
    </recommendedName>
</protein>
<evidence type="ECO:0000255" key="1">
    <source>
        <dbReference type="PROSITE-ProRule" id="PRU00227"/>
    </source>
</evidence>
<evidence type="ECO:0000256" key="2">
    <source>
        <dbReference type="SAM" id="MobiDB-lite"/>
    </source>
</evidence>
<evidence type="ECO:0000305" key="3"/>
<organism>
    <name type="scientific">Aspergillus oryzae (strain ATCC 42149 / RIB 40)</name>
    <name type="common">Yellow koji mold</name>
    <dbReference type="NCBI Taxonomy" id="510516"/>
    <lineage>
        <taxon>Eukaryota</taxon>
        <taxon>Fungi</taxon>
        <taxon>Dikarya</taxon>
        <taxon>Ascomycota</taxon>
        <taxon>Pezizomycotina</taxon>
        <taxon>Eurotiomycetes</taxon>
        <taxon>Eurotiomycetidae</taxon>
        <taxon>Eurotiales</taxon>
        <taxon>Aspergillaceae</taxon>
        <taxon>Aspergillus</taxon>
        <taxon>Aspergillus subgen. Circumdati</taxon>
    </lineage>
</organism>
<dbReference type="EMBL" id="M96953">
    <property type="protein sequence ID" value="AAA32686.1"/>
    <property type="status" value="ALT_SEQ"/>
    <property type="molecule type" value="Genomic_DNA"/>
</dbReference>
<dbReference type="EMBL" id="BA000050">
    <property type="protein sequence ID" value="BAE58075.1"/>
    <property type="molecule type" value="Genomic_DNA"/>
</dbReference>
<dbReference type="PIR" id="JQ1956">
    <property type="entry name" value="JQ1956"/>
</dbReference>
<dbReference type="RefSeq" id="XP_001820077.1">
    <property type="nucleotide sequence ID" value="XM_001820025.2"/>
</dbReference>
<dbReference type="STRING" id="510516.Q06157"/>
<dbReference type="EnsemblFungi" id="BAE58075">
    <property type="protein sequence ID" value="BAE58075"/>
    <property type="gene ID" value="AO090003000962"/>
</dbReference>
<dbReference type="GeneID" id="5992060"/>
<dbReference type="KEGG" id="aor:AO090003000962"/>
<dbReference type="VEuPathDB" id="FungiDB:AO090003000962"/>
<dbReference type="HOGENOM" id="CLU_006329_4_0_1"/>
<dbReference type="OMA" id="WRRLWYI"/>
<dbReference type="OrthoDB" id="54096at5052"/>
<dbReference type="Proteomes" id="UP000006564">
    <property type="component" value="Chromosome 2"/>
</dbReference>
<dbReference type="GO" id="GO:0005634">
    <property type="term" value="C:nucleus"/>
    <property type="evidence" value="ECO:0007669"/>
    <property type="project" value="UniProtKB-SubCell"/>
</dbReference>
<dbReference type="GO" id="GO:0003677">
    <property type="term" value="F:DNA binding"/>
    <property type="evidence" value="ECO:0007669"/>
    <property type="project" value="UniProtKB-KW"/>
</dbReference>
<dbReference type="GO" id="GO:0000981">
    <property type="term" value="F:DNA-binding transcription factor activity, RNA polymerase II-specific"/>
    <property type="evidence" value="ECO:0007669"/>
    <property type="project" value="InterPro"/>
</dbReference>
<dbReference type="GO" id="GO:0008270">
    <property type="term" value="F:zinc ion binding"/>
    <property type="evidence" value="ECO:0007669"/>
    <property type="project" value="InterPro"/>
</dbReference>
<dbReference type="GO" id="GO:0006351">
    <property type="term" value="P:DNA-templated transcription"/>
    <property type="evidence" value="ECO:0007669"/>
    <property type="project" value="InterPro"/>
</dbReference>
<dbReference type="GO" id="GO:0009893">
    <property type="term" value="P:positive regulation of metabolic process"/>
    <property type="evidence" value="ECO:0007669"/>
    <property type="project" value="UniProtKB-ARBA"/>
</dbReference>
<dbReference type="CDD" id="cd12148">
    <property type="entry name" value="fungal_TF_MHR"/>
    <property type="match status" value="1"/>
</dbReference>
<dbReference type="CDD" id="cd00067">
    <property type="entry name" value="GAL4"/>
    <property type="match status" value="1"/>
</dbReference>
<dbReference type="Gene3D" id="4.10.240.10">
    <property type="entry name" value="Zn(2)-C6 fungal-type DNA-binding domain"/>
    <property type="match status" value="1"/>
</dbReference>
<dbReference type="InterPro" id="IPR052073">
    <property type="entry name" value="Amide_Lactam_Regulators"/>
</dbReference>
<dbReference type="InterPro" id="IPR007219">
    <property type="entry name" value="Transcription_factor_dom_fun"/>
</dbReference>
<dbReference type="InterPro" id="IPR036864">
    <property type="entry name" value="Zn2-C6_fun-type_DNA-bd_sf"/>
</dbReference>
<dbReference type="InterPro" id="IPR001138">
    <property type="entry name" value="Zn2Cys6_DnaBD"/>
</dbReference>
<dbReference type="PANTHER" id="PTHR47171:SF4">
    <property type="entry name" value="ACETAMIDASE REGULATORY PROTEIN"/>
    <property type="match status" value="1"/>
</dbReference>
<dbReference type="PANTHER" id="PTHR47171">
    <property type="entry name" value="FARA-RELATED"/>
    <property type="match status" value="1"/>
</dbReference>
<dbReference type="Pfam" id="PF04082">
    <property type="entry name" value="Fungal_trans"/>
    <property type="match status" value="1"/>
</dbReference>
<dbReference type="Pfam" id="PF00172">
    <property type="entry name" value="Zn_clus"/>
    <property type="match status" value="1"/>
</dbReference>
<dbReference type="SMART" id="SM00906">
    <property type="entry name" value="Fungal_trans"/>
    <property type="match status" value="1"/>
</dbReference>
<dbReference type="SMART" id="SM00066">
    <property type="entry name" value="GAL4"/>
    <property type="match status" value="1"/>
</dbReference>
<dbReference type="SUPFAM" id="SSF57701">
    <property type="entry name" value="Zn2/Cys6 DNA-binding domain"/>
    <property type="match status" value="1"/>
</dbReference>
<dbReference type="PROSITE" id="PS00463">
    <property type="entry name" value="ZN2_CY6_FUNGAL_1"/>
    <property type="match status" value="1"/>
</dbReference>
<dbReference type="PROSITE" id="PS50048">
    <property type="entry name" value="ZN2_CY6_FUNGAL_2"/>
    <property type="match status" value="1"/>
</dbReference>
<accession>Q06157</accession>
<accession>Q00225</accession>
<accession>Q2UK40</accession>
<proteinExistence type="evidence at transcript level"/>
<gene>
    <name type="primary">amdR</name>
    <name type="ORF">AO090003000962</name>
</gene>
<sequence>MSSTAHNSQPSTGNGVTKRKSGSAACIHCHRRKVRCDARIVGLPCSNCRSAGKADCRIHEKKKRLAVRSILDPVPIRCRPPPDSDSTPKLLPSTPIQPNAFTTAFRGVQPDVTSPVAAGAQIIQSPHSSYTNGNHLSNNRGSQPITETQTFTRQPGADRSMELENNADLEKRLVKLIDEEESGSREIQRGVRAIYVGHELSNMSFLIRQQRDKDDDVYHFAGNEIPRRQLRTGHDQLLMDALTLPEPALADELVEAYFMHVNPGYPIIEEDLFMTQYRNRDPADPPPILLLQAILLVGAHVTRPKAERDALKEIFFRRVKWLFDSRIERNRDIMVQAALLMTWHSDSADDDVAANAHYWVGVAARIATGLGMHRNPVSSKFVPRDRRMWRRLWYILVQFDVMVSLSYGRPQAINLEDSDVSPLTPSDFEGCGSRVQAEYVIHFSELCTMIPYIVRERFGLRVSAERRKAALQEADEALANWSLKLPDSLRLRASDMDPWSAMLHLTYNNFLILLHRPHPRASAYSDDYGPHDAEICSAAAGVIASIFEELRLNDRLKFLWYSGVHTLFTAMIQVRVELRFSNPVLAINALRRFDSASYSLRELAEYWSHANTILRLFQDSKRLQEDLRMATSERPRRFSTHDQNKNTTNPSNPHPTPTPNLNSNTTIQSAQTEPRPPYEVPTPESPRMPPTTMSPHQNQPFDSWIPSSHLASVDPIDQPREFLDWRQLFSFTDPDQSVLPVPMEGLPELEDEWRQIYWQETPMSDLLQDGGWMHG</sequence>